<reference key="1">
    <citation type="journal article" date="1995" name="Plant Mol. Biol. Rep.">
        <title>Complete nucleotide sequence of the Porphyra purpurea chloroplast genome.</title>
        <authorList>
            <person name="Reith M.E."/>
            <person name="Munholland J."/>
        </authorList>
    </citation>
    <scope>NUCLEOTIDE SEQUENCE [LARGE SCALE GENOMIC DNA]</scope>
    <source>
        <strain>Avonport</strain>
    </source>
</reference>
<evidence type="ECO:0000255" key="1">
    <source>
        <dbReference type="HAMAP-Rule" id="MF_01382"/>
    </source>
</evidence>
<dbReference type="EC" id="7.4.2.8" evidence="1"/>
<dbReference type="EMBL" id="U38804">
    <property type="protein sequence ID" value="AAC08267.1"/>
    <property type="molecule type" value="Genomic_DNA"/>
</dbReference>
<dbReference type="PIR" id="S73302">
    <property type="entry name" value="S73302"/>
</dbReference>
<dbReference type="RefSeq" id="NP_053991.1">
    <property type="nucleotide sequence ID" value="NC_000925.1"/>
</dbReference>
<dbReference type="SMR" id="P51381"/>
<dbReference type="GeneID" id="810020"/>
<dbReference type="GO" id="GO:0009570">
    <property type="term" value="C:chloroplast stroma"/>
    <property type="evidence" value="ECO:0007669"/>
    <property type="project" value="UniProtKB-SubCell"/>
</dbReference>
<dbReference type="GO" id="GO:0009535">
    <property type="term" value="C:chloroplast thylakoid membrane"/>
    <property type="evidence" value="ECO:0007669"/>
    <property type="project" value="UniProtKB-SubCell"/>
</dbReference>
<dbReference type="GO" id="GO:0005829">
    <property type="term" value="C:cytosol"/>
    <property type="evidence" value="ECO:0007669"/>
    <property type="project" value="TreeGrafter"/>
</dbReference>
<dbReference type="GO" id="GO:0005886">
    <property type="term" value="C:plasma membrane"/>
    <property type="evidence" value="ECO:0007669"/>
    <property type="project" value="TreeGrafter"/>
</dbReference>
<dbReference type="GO" id="GO:0005524">
    <property type="term" value="F:ATP binding"/>
    <property type="evidence" value="ECO:0007669"/>
    <property type="project" value="UniProtKB-UniRule"/>
</dbReference>
<dbReference type="GO" id="GO:0008564">
    <property type="term" value="F:protein-exporting ATPase activity"/>
    <property type="evidence" value="ECO:0007669"/>
    <property type="project" value="UniProtKB-EC"/>
</dbReference>
<dbReference type="GO" id="GO:0065002">
    <property type="term" value="P:intracellular protein transmembrane transport"/>
    <property type="evidence" value="ECO:0007669"/>
    <property type="project" value="UniProtKB-UniRule"/>
</dbReference>
<dbReference type="GO" id="GO:0017038">
    <property type="term" value="P:protein import"/>
    <property type="evidence" value="ECO:0007669"/>
    <property type="project" value="InterPro"/>
</dbReference>
<dbReference type="GO" id="GO:0006605">
    <property type="term" value="P:protein targeting"/>
    <property type="evidence" value="ECO:0007669"/>
    <property type="project" value="UniProtKB-UniRule"/>
</dbReference>
<dbReference type="CDD" id="cd17928">
    <property type="entry name" value="DEXDc_SecA"/>
    <property type="match status" value="1"/>
</dbReference>
<dbReference type="CDD" id="cd18803">
    <property type="entry name" value="SF2_C_secA"/>
    <property type="match status" value="1"/>
</dbReference>
<dbReference type="FunFam" id="3.90.1440.10:FF:000003">
    <property type="entry name" value="Preprotein translocase SecA subunit"/>
    <property type="match status" value="1"/>
</dbReference>
<dbReference type="Gene3D" id="1.10.3060.10">
    <property type="entry name" value="Helical scaffold and wing domains of SecA"/>
    <property type="match status" value="1"/>
</dbReference>
<dbReference type="Gene3D" id="3.40.50.300">
    <property type="entry name" value="P-loop containing nucleotide triphosphate hydrolases"/>
    <property type="match status" value="2"/>
</dbReference>
<dbReference type="Gene3D" id="3.90.1440.10">
    <property type="entry name" value="SecA, preprotein cross-linking domain"/>
    <property type="match status" value="1"/>
</dbReference>
<dbReference type="HAMAP" id="MF_01382">
    <property type="entry name" value="SecA"/>
    <property type="match status" value="1"/>
</dbReference>
<dbReference type="InterPro" id="IPR014001">
    <property type="entry name" value="Helicase_ATP-bd"/>
</dbReference>
<dbReference type="InterPro" id="IPR027417">
    <property type="entry name" value="P-loop_NTPase"/>
</dbReference>
<dbReference type="InterPro" id="IPR000185">
    <property type="entry name" value="SecA"/>
</dbReference>
<dbReference type="InterPro" id="IPR020937">
    <property type="entry name" value="SecA_CS"/>
</dbReference>
<dbReference type="InterPro" id="IPR011115">
    <property type="entry name" value="SecA_DEAD"/>
</dbReference>
<dbReference type="InterPro" id="IPR014018">
    <property type="entry name" value="SecA_motor_DEAD"/>
</dbReference>
<dbReference type="InterPro" id="IPR011130">
    <property type="entry name" value="SecA_preprotein_X-link_dom"/>
</dbReference>
<dbReference type="InterPro" id="IPR044722">
    <property type="entry name" value="SecA_SF2_C"/>
</dbReference>
<dbReference type="InterPro" id="IPR011116">
    <property type="entry name" value="SecA_Wing/Scaffold"/>
</dbReference>
<dbReference type="InterPro" id="IPR036266">
    <property type="entry name" value="SecA_Wing/Scaffold_sf"/>
</dbReference>
<dbReference type="InterPro" id="IPR036670">
    <property type="entry name" value="SecA_X-link_sf"/>
</dbReference>
<dbReference type="NCBIfam" id="NF009538">
    <property type="entry name" value="PRK12904.1"/>
    <property type="match status" value="1"/>
</dbReference>
<dbReference type="NCBIfam" id="TIGR00963">
    <property type="entry name" value="secA"/>
    <property type="match status" value="1"/>
</dbReference>
<dbReference type="PANTHER" id="PTHR30612:SF0">
    <property type="entry name" value="CHLOROPLAST PROTEIN-TRANSPORTING ATPASE"/>
    <property type="match status" value="1"/>
</dbReference>
<dbReference type="PANTHER" id="PTHR30612">
    <property type="entry name" value="SECA INNER MEMBRANE COMPONENT OF SEC PROTEIN SECRETION SYSTEM"/>
    <property type="match status" value="1"/>
</dbReference>
<dbReference type="Pfam" id="PF21090">
    <property type="entry name" value="P-loop_SecA"/>
    <property type="match status" value="1"/>
</dbReference>
<dbReference type="Pfam" id="PF07517">
    <property type="entry name" value="SecA_DEAD"/>
    <property type="match status" value="1"/>
</dbReference>
<dbReference type="Pfam" id="PF01043">
    <property type="entry name" value="SecA_PP_bind"/>
    <property type="match status" value="1"/>
</dbReference>
<dbReference type="Pfam" id="PF07516">
    <property type="entry name" value="SecA_SW"/>
    <property type="match status" value="1"/>
</dbReference>
<dbReference type="PRINTS" id="PR00906">
    <property type="entry name" value="SECA"/>
</dbReference>
<dbReference type="SMART" id="SM00957">
    <property type="entry name" value="SecA_DEAD"/>
    <property type="match status" value="1"/>
</dbReference>
<dbReference type="SMART" id="SM00958">
    <property type="entry name" value="SecA_PP_bind"/>
    <property type="match status" value="1"/>
</dbReference>
<dbReference type="SUPFAM" id="SSF81886">
    <property type="entry name" value="Helical scaffold and wing domains of SecA"/>
    <property type="match status" value="1"/>
</dbReference>
<dbReference type="SUPFAM" id="SSF52540">
    <property type="entry name" value="P-loop containing nucleoside triphosphate hydrolases"/>
    <property type="match status" value="2"/>
</dbReference>
<dbReference type="SUPFAM" id="SSF81767">
    <property type="entry name" value="Pre-protein crosslinking domain of SecA"/>
    <property type="match status" value="1"/>
</dbReference>
<dbReference type="PROSITE" id="PS01312">
    <property type="entry name" value="SECA"/>
    <property type="match status" value="1"/>
</dbReference>
<dbReference type="PROSITE" id="PS51196">
    <property type="entry name" value="SECA_MOTOR_DEAD"/>
    <property type="match status" value="1"/>
</dbReference>
<keyword id="KW-0067">ATP-binding</keyword>
<keyword id="KW-0150">Chloroplast</keyword>
<keyword id="KW-0472">Membrane</keyword>
<keyword id="KW-0547">Nucleotide-binding</keyword>
<keyword id="KW-0934">Plastid</keyword>
<keyword id="KW-0653">Protein transport</keyword>
<keyword id="KW-0793">Thylakoid</keyword>
<keyword id="KW-1278">Translocase</keyword>
<keyword id="KW-0811">Translocation</keyword>
<keyword id="KW-0813">Transport</keyword>
<organism>
    <name type="scientific">Porphyra purpurea</name>
    <name type="common">Red seaweed</name>
    <name type="synonym">Ulva purpurea</name>
    <dbReference type="NCBI Taxonomy" id="2787"/>
    <lineage>
        <taxon>Eukaryota</taxon>
        <taxon>Rhodophyta</taxon>
        <taxon>Bangiophyceae</taxon>
        <taxon>Bangiales</taxon>
        <taxon>Bangiaceae</taxon>
        <taxon>Porphyra</taxon>
    </lineage>
</organism>
<comment type="function">
    <text evidence="1">Has a central role in coupling the hydrolysis of ATP to the transfer of proteins across the thylakoid membrane.</text>
</comment>
<comment type="catalytic activity">
    <reaction evidence="1">
        <text>ATP + H2O + cellular proteinSide 1 = ADP + phosphate + cellular proteinSide 2.</text>
        <dbReference type="EC" id="7.4.2.8"/>
    </reaction>
</comment>
<comment type="subcellular location">
    <subcellularLocation>
        <location evidence="1">Plastid</location>
        <location evidence="1">Chloroplast stroma</location>
    </subcellularLocation>
    <subcellularLocation>
        <location evidence="1">Plastid</location>
        <location evidence="1">Chloroplast thylakoid membrane</location>
        <topology evidence="1">Peripheral membrane protein</topology>
    </subcellularLocation>
    <text evidence="1">A minor fraction is associated with the chloroplast thylakoid membrane.</text>
</comment>
<comment type="similarity">
    <text evidence="1">Belongs to the SecA family.</text>
</comment>
<proteinExistence type="inferred from homology"/>
<gene>
    <name evidence="1" type="primary">secA</name>
</gene>
<protein>
    <recommendedName>
        <fullName evidence="1">Protein translocase subunit SecA</fullName>
        <ecNumber evidence="1">7.4.2.8</ecNumber>
    </recommendedName>
</protein>
<feature type="chain" id="PRO_0000109626" description="Protein translocase subunit SecA">
    <location>
        <begin position="1"/>
        <end position="884"/>
    </location>
</feature>
<feature type="binding site" evidence="1">
    <location>
        <position position="83"/>
    </location>
    <ligand>
        <name>ATP</name>
        <dbReference type="ChEBI" id="CHEBI:30616"/>
    </ligand>
</feature>
<feature type="binding site" evidence="1">
    <location>
        <begin position="101"/>
        <end position="105"/>
    </location>
    <ligand>
        <name>ATP</name>
        <dbReference type="ChEBI" id="CHEBI:30616"/>
    </ligand>
</feature>
<feature type="binding site" evidence="1">
    <location>
        <position position="491"/>
    </location>
    <ligand>
        <name>ATP</name>
        <dbReference type="ChEBI" id="CHEBI:30616"/>
    </ligand>
</feature>
<sequence length="884" mass="101326">MFNLLFSSSNQRRINSYAATVKKINSLEQKIGNLSDEELFTKTSYFKDELKKGVTLDYILPEAFSVVREAGCRVLGLRVFDVQIIGAIILHQGKIAEMKTGEGKTLVATLAGYLNALSGKGVHIVTVNDYLARRDSEWVGQIHKFLGLSVGLIQQDLSKAERKLAYQCDVTYVTNSELGFDYLKDNMVLSMSEIVQNKFAFCIIDEVDSILIDEARTPLIISGPSEAPVEKYTQTNLLSNILFKDVHYEVDEKARNIILTDKGTLFCEDHLSIDNLYDLENPWVHYILNAIKAKELFIKDVHYIIRDNQVVIVDEFTGRIMSGRRWSDGLHQAIEAKEQVPIQQENQTYASITYQNFFLLYPKLSGMTGTAKTEESELDKIYNLEVICVPTHRPLRRKEFSDLVYSNEYRKWEAIADECYDMYRAGRPTLVGTTSVEKSELLSKLLTEYKIPHSLLNAKPENVEKESDIIAQAGRQSSVTIATNMAGRGTDIILGGNPSYIAKSILIDLLIKKISVQNNLKLQQLSLKTQYCINQILKSLEDDLIYANLSVLELEKKISIACEQVAISRNLEIQLRKAYQLIFQEYENIFSQEKKYVAQAGGLHVIGTERHESRRIDNQLRGRAGRQGDPGSSRFFLSIEDNLLRIFGGNKIADLMQALNVDDDTPMESTLLSKSLEAAQKKVEAYFYDTRKQVFEYDQVLNSQRQAIYAERRRILESGYPRDCILQYAESTIDDIVNFCLTSKENNEKFVNLNTKIKYLLNATDTFFISKDLYSDSSELKKWITEQVRINYDLREAYLEQIKPGLIRQLEKYYLLQQIDNAWKDHLQKMGALRDAIGWRSYGQQDPLVEYKNEAFNLFIEMITHVKHTVVYAILRSRLMVKND</sequence>
<name>SECA_PORPU</name>
<geneLocation type="chloroplast"/>
<accession>P51381</accession>